<gene>
    <name evidence="10" type="primary">tbh-1</name>
    <name evidence="10" type="ORF">H13N06.6</name>
</gene>
<accession>Q9XTQ6</accession>
<accession>C6KRQ4</accession>
<keyword id="KW-0025">Alternative splicing</keyword>
<keyword id="KW-0186">Copper</keyword>
<keyword id="KW-1015">Disulfide bond</keyword>
<keyword id="KW-0325">Glycoprotein</keyword>
<keyword id="KW-0472">Membrane</keyword>
<keyword id="KW-0479">Metal-binding</keyword>
<keyword id="KW-0503">Monooxygenase</keyword>
<keyword id="KW-0530">Neurotransmitter biosynthesis</keyword>
<keyword id="KW-0560">Oxidoreductase</keyword>
<keyword id="KW-1185">Reference proteome</keyword>
<keyword id="KW-0812">Transmembrane</keyword>
<keyword id="KW-1133">Transmembrane helix</keyword>
<reference key="1">
    <citation type="journal article" date="1998" name="Science">
        <title>Genome sequence of the nematode C. elegans: a platform for investigating biology.</title>
        <authorList>
            <consortium name="The C. elegans sequencing consortium"/>
        </authorList>
    </citation>
    <scope>NUCLEOTIDE SEQUENCE [LARGE SCALE GENOMIC DNA]</scope>
    <source>
        <strain>Bristol N2</strain>
    </source>
</reference>
<reference key="2">
    <citation type="journal article" date="2005" name="Neuron">
        <title>Tyramine functions independently of octopamine in the Caenorhabditis elegans nervous system.</title>
        <authorList>
            <person name="Alkema M.J."/>
            <person name="Hunter-Ensor M."/>
            <person name="Ringstad N."/>
            <person name="Horvitz H.R."/>
        </authorList>
    </citation>
    <scope>FUNCTION</scope>
    <scope>TISSUE SPECIFICITY</scope>
    <scope>DISRUPTION PHENOTYPE</scope>
</reference>
<reference key="3">
    <citation type="journal article" date="2007" name="Mol. Cell. Proteomics">
        <title>Proteomics reveals N-linked glycoprotein diversity in Caenorhabditis elegans and suggests an atypical translocation mechanism for integral membrane proteins.</title>
        <authorList>
            <person name="Kaji H."/>
            <person name="Kamiie J."/>
            <person name="Kawakami H."/>
            <person name="Kido K."/>
            <person name="Yamauchi Y."/>
            <person name="Shinkawa T."/>
            <person name="Taoka M."/>
            <person name="Takahashi N."/>
            <person name="Isobe T."/>
        </authorList>
    </citation>
    <scope>GLYCOSYLATION [LARGE SCALE ANALYSIS] AT ASN-555</scope>
    <scope>IDENTIFICATION BY MASS SPECTROMETRY</scope>
    <source>
        <strain>Bristol N2</strain>
    </source>
</reference>
<reference key="4">
    <citation type="journal article" date="2015" name="Cell">
        <title>Neuronal CRTC-1 governs systemic mitochondrial metabolism and lifespan via a catecholamine signal.</title>
        <authorList>
            <person name="Burkewitz K."/>
            <person name="Morantte I."/>
            <person name="Weir H.J."/>
            <person name="Yeo R."/>
            <person name="Zhang Y."/>
            <person name="Huynh F.K."/>
            <person name="Ilkayeva O.R."/>
            <person name="Hirschey M.D."/>
            <person name="Grant A.R."/>
            <person name="Mair W.B."/>
        </authorList>
    </citation>
    <scope>FUNCTION</scope>
</reference>
<feature type="chain" id="PRO_0000305215" description="Tyramine beta-hydroxylase" evidence="8">
    <location>
        <begin position="1"/>
        <end position="657"/>
    </location>
</feature>
<feature type="transmembrane region" description="Helical" evidence="3">
    <location>
        <begin position="77"/>
        <end position="97"/>
    </location>
</feature>
<feature type="domain" description="DOMON" evidence="4">
    <location>
        <begin position="103"/>
        <end position="214"/>
    </location>
</feature>
<feature type="active site" evidence="3">
    <location>
        <position position="278"/>
    </location>
</feature>
<feature type="active site" evidence="3">
    <location>
        <position position="458"/>
    </location>
</feature>
<feature type="binding site" evidence="1">
    <location>
        <position position="312"/>
    </location>
    <ligand>
        <name>Cu(2+)</name>
        <dbReference type="ChEBI" id="CHEBI:29036"/>
        <label>A</label>
    </ligand>
</feature>
<feature type="binding site" evidence="1">
    <location>
        <position position="313"/>
    </location>
    <ligand>
        <name>Cu(2+)</name>
        <dbReference type="ChEBI" id="CHEBI:29036"/>
        <label>A</label>
    </ligand>
</feature>
<feature type="binding site" evidence="1">
    <location>
        <position position="380"/>
    </location>
    <ligand>
        <name>Cu(2+)</name>
        <dbReference type="ChEBI" id="CHEBI:29036"/>
        <label>A</label>
    </ligand>
</feature>
<feature type="binding site" evidence="1">
    <location>
        <position position="458"/>
    </location>
    <ligand>
        <name>Cu(2+)</name>
        <dbReference type="ChEBI" id="CHEBI:29036"/>
        <label>B</label>
    </ligand>
</feature>
<feature type="binding site" evidence="1">
    <location>
        <position position="460"/>
    </location>
    <ligand>
        <name>Cu(2+)</name>
        <dbReference type="ChEBI" id="CHEBI:29036"/>
        <label>B</label>
    </ligand>
</feature>
<feature type="binding site" evidence="1">
    <location>
        <position position="533"/>
    </location>
    <ligand>
        <name>Cu(2+)</name>
        <dbReference type="ChEBI" id="CHEBI:29036"/>
        <label>B</label>
    </ligand>
</feature>
<feature type="glycosylation site" description="N-linked (GlcNAc...) asparagine" evidence="3">
    <location>
        <position position="104"/>
    </location>
</feature>
<feature type="glycosylation site" description="N-linked (GlcNAc...) asparagine" evidence="3">
    <location>
        <position position="143"/>
    </location>
</feature>
<feature type="glycosylation site" description="N-linked (GlcNAc...) asparagine" evidence="6">
    <location>
        <position position="555"/>
    </location>
</feature>
<feature type="disulfide bond" evidence="1">
    <location>
        <begin position="280"/>
        <end position="330"/>
    </location>
</feature>
<feature type="disulfide bond" evidence="1">
    <location>
        <begin position="319"/>
        <end position="342"/>
    </location>
</feature>
<feature type="disulfide bond" evidence="1">
    <location>
        <begin position="437"/>
        <end position="549"/>
    </location>
</feature>
<feature type="disulfide bond" evidence="1">
    <location>
        <begin position="441"/>
        <end position="606"/>
    </location>
</feature>
<feature type="disulfide bond" evidence="1">
    <location>
        <begin position="512"/>
        <end position="534"/>
    </location>
</feature>
<feature type="splice variant" id="VSP_057738" description="In isoform a." evidence="8">
    <location>
        <begin position="1"/>
        <end position="72"/>
    </location>
</feature>
<proteinExistence type="evidence at protein level"/>
<name>TBH1_CAEEL</name>
<sequence length="657" mass="74963">MEPTASQGIQYLRGGVEWILKLLNLHILNVKHENKPLLFRLIDLKVYIPSSVSTVRWSSGASSYVILGEYRKMRSAVALLFLLVAYCGGVVHAGEIVAELYHTNVTVKWHTDYERQLVDFSIWFGASTPDVLFLGFSDFGDTNNSDVLMYYNSKKEIKDAYTNRDFKITSDLQQDFQLLRKRKDHIVVRRKLTTCDSRDYAFLPGTTQFYIAASWGSTNLVDIRDKRWVVDKKFGKVIEGPTDQPNIEEEPAALEKDVKVVIVNSNSPDPIPNVETTYKCIIRKMPFDTVNNMYHVVRMEPYVTPGNEHLVHHMEIFMCRDEVEEWSGSCNDPKKPPKSKSCSHVIAAWAMGEGPIHYPKEAGLPIGGKGKNAYVMVEIHYNNPELHKGVIDSSGFQFFVTGQLRKYDAGIMELGLIYSDANSVPPNQKAWAMNGYCPSQCTKNLPEEGINIFASQLHAHLTGRKLFTSQYRSGVRIGDVNRDEHYSPHWQHLQQLRPVVKVMPGDTLVTTCVYDTRKRSKVTFGGYRIVDEMCVNYIYYYPASDVEVCKSAISNSTLRAYFSERHGMDGKRMQISDMYSNVKDWGNGVDEEFYNVLNVGNMNMNCLKSNGEPFEFESKDSRQSWENMARPTFVSGSFITTRDRFQCPAINDMINFE</sequence>
<evidence type="ECO:0000250" key="1">
    <source>
        <dbReference type="UniProtKB" id="P09172"/>
    </source>
</evidence>
<evidence type="ECO:0000250" key="2">
    <source>
        <dbReference type="UniProtKB" id="Q86B61"/>
    </source>
</evidence>
<evidence type="ECO:0000255" key="3"/>
<evidence type="ECO:0000255" key="4">
    <source>
        <dbReference type="PROSITE-ProRule" id="PRU00246"/>
    </source>
</evidence>
<evidence type="ECO:0000269" key="5">
    <source>
    </source>
</evidence>
<evidence type="ECO:0000269" key="6">
    <source>
    </source>
</evidence>
<evidence type="ECO:0000269" key="7">
    <source>
    </source>
</evidence>
<evidence type="ECO:0000305" key="8"/>
<evidence type="ECO:0000312" key="9">
    <source>
        <dbReference type="WormBase" id="H13N06.6a"/>
    </source>
</evidence>
<evidence type="ECO:0000312" key="10">
    <source>
        <dbReference type="WormBase" id="H13N06.6b"/>
    </source>
</evidence>
<organism>
    <name type="scientific">Caenorhabditis elegans</name>
    <dbReference type="NCBI Taxonomy" id="6239"/>
    <lineage>
        <taxon>Eukaryota</taxon>
        <taxon>Metazoa</taxon>
        <taxon>Ecdysozoa</taxon>
        <taxon>Nematoda</taxon>
        <taxon>Chromadorea</taxon>
        <taxon>Rhabditida</taxon>
        <taxon>Rhabditina</taxon>
        <taxon>Rhabditomorpha</taxon>
        <taxon>Rhabditoidea</taxon>
        <taxon>Rhabditidae</taxon>
        <taxon>Peloderinae</taxon>
        <taxon>Caenorhabditis</taxon>
    </lineage>
</organism>
<dbReference type="EC" id="1.14.17.-" evidence="2"/>
<dbReference type="EMBL" id="Z99942">
    <property type="protein sequence ID" value="CAB17071.2"/>
    <property type="molecule type" value="Genomic_DNA"/>
</dbReference>
<dbReference type="EMBL" id="BX284606">
    <property type="protein sequence ID" value="CAZ65507.1"/>
    <property type="molecule type" value="Genomic_DNA"/>
</dbReference>
<dbReference type="PIR" id="T23090">
    <property type="entry name" value="T23090"/>
</dbReference>
<dbReference type="RefSeq" id="NP_001257264.1">
    <molecule id="Q9XTQ6-1"/>
    <property type="nucleotide sequence ID" value="NM_001270335.2"/>
</dbReference>
<dbReference type="RefSeq" id="NP_001257265.1">
    <molecule id="Q9XTQ6-2"/>
    <property type="nucleotide sequence ID" value="NM_001270336.3"/>
</dbReference>
<dbReference type="SMR" id="Q9XTQ6"/>
<dbReference type="BioGRID" id="46533">
    <property type="interactions" value="3"/>
</dbReference>
<dbReference type="FunCoup" id="Q9XTQ6">
    <property type="interactions" value="48"/>
</dbReference>
<dbReference type="STRING" id="6239.H13N06.6b.1"/>
<dbReference type="GlyCosmos" id="Q9XTQ6">
    <property type="glycosylation" value="3 sites, No reported glycans"/>
</dbReference>
<dbReference type="iPTMnet" id="Q9XTQ6"/>
<dbReference type="PaxDb" id="6239-H13N06.6b"/>
<dbReference type="PeptideAtlas" id="Q9XTQ6"/>
<dbReference type="EnsemblMetazoa" id="H13N06.6a.1">
    <molecule id="Q9XTQ6-2"/>
    <property type="protein sequence ID" value="H13N06.6a.1"/>
    <property type="gene ID" value="WBGene00006541"/>
</dbReference>
<dbReference type="EnsemblMetazoa" id="H13N06.6b.1">
    <molecule id="Q9XTQ6-1"/>
    <property type="protein sequence ID" value="H13N06.6b.1"/>
    <property type="gene ID" value="WBGene00006541"/>
</dbReference>
<dbReference type="GeneID" id="181639"/>
<dbReference type="KEGG" id="cel:CELE_H13N06.6"/>
<dbReference type="UCSC" id="H13N06.6.2">
    <molecule id="Q9XTQ6-1"/>
    <property type="organism name" value="c. elegans"/>
</dbReference>
<dbReference type="AGR" id="WB:WBGene00006541"/>
<dbReference type="CTD" id="181639"/>
<dbReference type="WormBase" id="H13N06.6a">
    <molecule id="Q9XTQ6-2"/>
    <property type="protein sequence ID" value="CE31553"/>
    <property type="gene ID" value="WBGene00006541"/>
    <property type="gene designation" value="tbh-1"/>
</dbReference>
<dbReference type="WormBase" id="H13N06.6b">
    <molecule id="Q9XTQ6-1"/>
    <property type="protein sequence ID" value="CE43881"/>
    <property type="gene ID" value="WBGene00006541"/>
    <property type="gene designation" value="tbh-1"/>
</dbReference>
<dbReference type="eggNOG" id="KOG3568">
    <property type="taxonomic scope" value="Eukaryota"/>
</dbReference>
<dbReference type="GeneTree" id="ENSGT00530000063085"/>
<dbReference type="HOGENOM" id="CLU_017939_3_0_1"/>
<dbReference type="InParanoid" id="Q9XTQ6"/>
<dbReference type="OMA" id="FPHFSGP"/>
<dbReference type="OrthoDB" id="129121at2759"/>
<dbReference type="PhylomeDB" id="Q9XTQ6"/>
<dbReference type="PRO" id="PR:Q9XTQ6"/>
<dbReference type="Proteomes" id="UP000001940">
    <property type="component" value="Chromosome X"/>
</dbReference>
<dbReference type="Bgee" id="WBGene00006541">
    <property type="expression patterns" value="Expressed in adult organism and 3 other cell types or tissues"/>
</dbReference>
<dbReference type="ExpressionAtlas" id="Q9XTQ6">
    <property type="expression patterns" value="baseline and differential"/>
</dbReference>
<dbReference type="GO" id="GO:0005615">
    <property type="term" value="C:extracellular space"/>
    <property type="evidence" value="ECO:0000318"/>
    <property type="project" value="GO_Central"/>
</dbReference>
<dbReference type="GO" id="GO:0030667">
    <property type="term" value="C:secretory granule membrane"/>
    <property type="evidence" value="ECO:0000318"/>
    <property type="project" value="GO_Central"/>
</dbReference>
<dbReference type="GO" id="GO:0045202">
    <property type="term" value="C:synapse"/>
    <property type="evidence" value="ECO:0000314"/>
    <property type="project" value="WormBase"/>
</dbReference>
<dbReference type="GO" id="GO:0005507">
    <property type="term" value="F:copper ion binding"/>
    <property type="evidence" value="ECO:0000318"/>
    <property type="project" value="GO_Central"/>
</dbReference>
<dbReference type="GO" id="GO:0004500">
    <property type="term" value="F:dopamine beta-monooxygenase activity"/>
    <property type="evidence" value="ECO:0000318"/>
    <property type="project" value="GO_Central"/>
</dbReference>
<dbReference type="GO" id="GO:0004836">
    <property type="term" value="F:tyramine-beta hydroxylase activity"/>
    <property type="evidence" value="ECO:0000315"/>
    <property type="project" value="WormBase"/>
</dbReference>
<dbReference type="GO" id="GO:0042420">
    <property type="term" value="P:dopamine catabolic process"/>
    <property type="evidence" value="ECO:0000318"/>
    <property type="project" value="GO_Central"/>
</dbReference>
<dbReference type="GO" id="GO:0042421">
    <property type="term" value="P:norepinephrine biosynthetic process"/>
    <property type="evidence" value="ECO:0000318"/>
    <property type="project" value="GO_Central"/>
</dbReference>
<dbReference type="GO" id="GO:0006589">
    <property type="term" value="P:octopamine biosynthetic process"/>
    <property type="evidence" value="ECO:0000315"/>
    <property type="project" value="WormBase"/>
</dbReference>
<dbReference type="CDD" id="cd09631">
    <property type="entry name" value="DOMON_DOH"/>
    <property type="match status" value="1"/>
</dbReference>
<dbReference type="FunFam" id="2.60.120.310:FF:000004">
    <property type="entry name" value="DBH-like monooxygenase protein 1"/>
    <property type="match status" value="1"/>
</dbReference>
<dbReference type="FunFam" id="2.60.120.230:FF:000001">
    <property type="entry name" value="Monooxygenase, DBH-like 1"/>
    <property type="match status" value="1"/>
</dbReference>
<dbReference type="Gene3D" id="2.60.120.230">
    <property type="match status" value="1"/>
</dbReference>
<dbReference type="Gene3D" id="2.60.120.310">
    <property type="entry name" value="Copper type II, ascorbate-dependent monooxygenase, N-terminal domain"/>
    <property type="match status" value="1"/>
</dbReference>
<dbReference type="InterPro" id="IPR014784">
    <property type="entry name" value="Cu2_ascorb_mOase-like_C"/>
</dbReference>
<dbReference type="InterPro" id="IPR020611">
    <property type="entry name" value="Cu2_ascorb_mOase_CS-1"/>
</dbReference>
<dbReference type="InterPro" id="IPR000323">
    <property type="entry name" value="Cu2_ascorb_mOase_N"/>
</dbReference>
<dbReference type="InterPro" id="IPR036939">
    <property type="entry name" value="Cu2_ascorb_mOase_N_sf"/>
</dbReference>
<dbReference type="InterPro" id="IPR024548">
    <property type="entry name" value="Cu2_monoox_C"/>
</dbReference>
<dbReference type="InterPro" id="IPR000945">
    <property type="entry name" value="DBH-like"/>
</dbReference>
<dbReference type="InterPro" id="IPR045266">
    <property type="entry name" value="DOH_DOMON"/>
</dbReference>
<dbReference type="InterPro" id="IPR005018">
    <property type="entry name" value="DOMON_domain"/>
</dbReference>
<dbReference type="InterPro" id="IPR008977">
    <property type="entry name" value="PHM/PNGase_F_dom_sf"/>
</dbReference>
<dbReference type="InterPro" id="IPR028460">
    <property type="entry name" value="Tbh/DBH"/>
</dbReference>
<dbReference type="PANTHER" id="PTHR10157">
    <property type="entry name" value="DOPAMINE BETA HYDROXYLASE RELATED"/>
    <property type="match status" value="1"/>
</dbReference>
<dbReference type="PANTHER" id="PTHR10157:SF23">
    <property type="entry name" value="MOXD1 HOMOLOG 1"/>
    <property type="match status" value="1"/>
</dbReference>
<dbReference type="Pfam" id="PF03712">
    <property type="entry name" value="Cu2_monoox_C"/>
    <property type="match status" value="1"/>
</dbReference>
<dbReference type="Pfam" id="PF01082">
    <property type="entry name" value="Cu2_monooxygen"/>
    <property type="match status" value="1"/>
</dbReference>
<dbReference type="Pfam" id="PF03351">
    <property type="entry name" value="DOMON"/>
    <property type="match status" value="1"/>
</dbReference>
<dbReference type="PRINTS" id="PR00767">
    <property type="entry name" value="DBMONOXGNASE"/>
</dbReference>
<dbReference type="SUPFAM" id="SSF49742">
    <property type="entry name" value="PHM/PNGase F"/>
    <property type="match status" value="2"/>
</dbReference>
<dbReference type="PROSITE" id="PS00084">
    <property type="entry name" value="CU2_MONOOXYGENASE_1"/>
    <property type="match status" value="1"/>
</dbReference>
<dbReference type="PROSITE" id="PS50836">
    <property type="entry name" value="DOMON"/>
    <property type="match status" value="1"/>
</dbReference>
<comment type="function">
    <text evidence="5 7">Required for the conversion of tyramine to octopamine, a precursor of octapamine but probably itself a neurotransmitter (PubMed:15848803). Involved in the regulation of egg laying, which is inhibited by tyramine (PubMed:15848803). Due to its involvement in octopamine biosynthesis, also required for crtc-1-dependent regulation of AMPK-mediated longevity (PubMed:25723162).</text>
</comment>
<comment type="catalytic activity">
    <reaction evidence="2">
        <text>tyramine + L-ascorbate + O2 = (R)-octopamine + L-dehydroascorbate + H2O</text>
        <dbReference type="Rhea" id="RHEA:57132"/>
        <dbReference type="ChEBI" id="CHEBI:15377"/>
        <dbReference type="ChEBI" id="CHEBI:15379"/>
        <dbReference type="ChEBI" id="CHEBI:38290"/>
        <dbReference type="ChEBI" id="CHEBI:58539"/>
        <dbReference type="ChEBI" id="CHEBI:141486"/>
        <dbReference type="ChEBI" id="CHEBI:327995"/>
    </reaction>
    <physiologicalReaction direction="left-to-right" evidence="2">
        <dbReference type="Rhea" id="RHEA:57133"/>
    </physiologicalReaction>
</comment>
<comment type="cofactor">
    <cofactor evidence="2">
        <name>Cu(2+)</name>
        <dbReference type="ChEBI" id="CHEBI:29036"/>
    </cofactor>
    <text evidence="2">Binds 2 copper ions per subunit.</text>
</comment>
<comment type="subcellular location">
    <molecule>Isoform b</molecule>
    <subcellularLocation>
        <location evidence="3">Membrane</location>
        <topology evidence="3">Single-pass membrane protein</topology>
    </subcellularLocation>
</comment>
<comment type="alternative products">
    <event type="alternative splicing"/>
    <isoform>
        <id>Q9XTQ6-1</id>
        <name evidence="10">b</name>
        <sequence type="displayed"/>
    </isoform>
    <isoform>
        <id>Q9XTQ6-2</id>
        <name evidence="9">a</name>
        <sequence type="described" ref="VSP_057738"/>
    </isoform>
</comment>
<comment type="tissue specificity">
    <text evidence="5">Present in synaptic regions of RIC interneurons. Present in gonadal sheath cells of hermaphrodites (at protein level).</text>
</comment>
<comment type="disruption phenotype">
    <text evidence="5">Worms are viable and healthy, but have slightly reduced locomotion rates, and defects in the inhibition of pharyngeal pumping and egg laying in the absence of food.</text>
</comment>
<comment type="similarity">
    <text evidence="8">Belongs to the copper type II ascorbate-dependent monooxygenase family.</text>
</comment>
<protein>
    <recommendedName>
        <fullName evidence="10">Tyramine beta-hydroxylase</fullName>
        <ecNumber evidence="2">1.14.17.-</ecNumber>
    </recommendedName>
    <alternativeName>
        <fullName>Tyramine beta-monooxygenase</fullName>
        <shortName>TbetaM</shortName>
    </alternativeName>
</protein>